<feature type="chain" id="PRO_1000093416" description="Peptide chain release factor 1">
    <location>
        <begin position="1"/>
        <end position="360"/>
    </location>
</feature>
<feature type="region of interest" description="Disordered" evidence="2">
    <location>
        <begin position="285"/>
        <end position="309"/>
    </location>
</feature>
<feature type="compositionally biased region" description="Basic and acidic residues" evidence="2">
    <location>
        <begin position="285"/>
        <end position="295"/>
    </location>
</feature>
<feature type="modified residue" description="N5-methylglutamine" evidence="1">
    <location>
        <position position="235"/>
    </location>
</feature>
<reference key="1">
    <citation type="submission" date="2008-06" db="EMBL/GenBank/DDBJ databases">
        <title>Genome and proteome analysis of A. pleuropneumoniae serotype 7.</title>
        <authorList>
            <person name="Linke B."/>
            <person name="Buettner F."/>
            <person name="Martinez-Arias R."/>
            <person name="Goesmann A."/>
            <person name="Baltes N."/>
            <person name="Tegetmeyer H."/>
            <person name="Singh M."/>
            <person name="Gerlach G.F."/>
        </authorList>
    </citation>
    <scope>NUCLEOTIDE SEQUENCE [LARGE SCALE GENOMIC DNA]</scope>
    <source>
        <strain>AP76</strain>
    </source>
</reference>
<evidence type="ECO:0000255" key="1">
    <source>
        <dbReference type="HAMAP-Rule" id="MF_00093"/>
    </source>
</evidence>
<evidence type="ECO:0000256" key="2">
    <source>
        <dbReference type="SAM" id="MobiDB-lite"/>
    </source>
</evidence>
<sequence length="360" mass="40728">MKDSIINKLESLSERHEELQALLGDPSVINDQDKFRAYSKEYSQLEEVVTTFNRWKKLNSDIEEAQILLDDPDMKEMAAEEIAENKAEIENLEQHLQILLLPKDPNDEYNAFLEIRAGTGGDEAGIFAGDLYRMYSRYCESKRWRIEEMSANESEQGGYKEIIVKISGEGVYGQLKFESGGHRVQRVPKTESQGRIHTSACTVAVMPELPESEMPEINPTDLRIDTYRSSGAGGQHVNTTDSAVRITHIPTGIVVECQDERSQHKNKAKALAVLASRIVQVEQERQAAEQADTRRNLLGSGDRSDKIRTYNYPQGRVTDHRINLTVYRLDEVMNGKIDELIQPIITEYQADQLAALSEQA</sequence>
<comment type="function">
    <text evidence="1">Peptide chain release factor 1 directs the termination of translation in response to the peptide chain termination codons UAG and UAA.</text>
</comment>
<comment type="subcellular location">
    <subcellularLocation>
        <location evidence="1">Cytoplasm</location>
    </subcellularLocation>
</comment>
<comment type="PTM">
    <text evidence="1">Methylated by PrmC. Methylation increases the termination efficiency of RF1.</text>
</comment>
<comment type="similarity">
    <text evidence="1">Belongs to the prokaryotic/mitochondrial release factor family.</text>
</comment>
<keyword id="KW-0963">Cytoplasm</keyword>
<keyword id="KW-0488">Methylation</keyword>
<keyword id="KW-0648">Protein biosynthesis</keyword>
<dbReference type="EMBL" id="CP001091">
    <property type="protein sequence ID" value="ACE62783.1"/>
    <property type="molecule type" value="Genomic_DNA"/>
</dbReference>
<dbReference type="RefSeq" id="WP_005602997.1">
    <property type="nucleotide sequence ID" value="NC_010939.1"/>
</dbReference>
<dbReference type="SMR" id="B3GZJ0"/>
<dbReference type="KEGG" id="apa:APP7_2131"/>
<dbReference type="HOGENOM" id="CLU_036856_0_1_6"/>
<dbReference type="Proteomes" id="UP000001226">
    <property type="component" value="Chromosome"/>
</dbReference>
<dbReference type="GO" id="GO:0005737">
    <property type="term" value="C:cytoplasm"/>
    <property type="evidence" value="ECO:0007669"/>
    <property type="project" value="UniProtKB-SubCell"/>
</dbReference>
<dbReference type="GO" id="GO:0016149">
    <property type="term" value="F:translation release factor activity, codon specific"/>
    <property type="evidence" value="ECO:0007669"/>
    <property type="project" value="UniProtKB-UniRule"/>
</dbReference>
<dbReference type="FunFam" id="3.30.160.20:FF:000004">
    <property type="entry name" value="Peptide chain release factor 1"/>
    <property type="match status" value="1"/>
</dbReference>
<dbReference type="FunFam" id="3.30.70.1660:FF:000002">
    <property type="entry name" value="Peptide chain release factor 1"/>
    <property type="match status" value="1"/>
</dbReference>
<dbReference type="FunFam" id="3.30.70.1660:FF:000004">
    <property type="entry name" value="Peptide chain release factor 1"/>
    <property type="match status" value="1"/>
</dbReference>
<dbReference type="Gene3D" id="3.30.160.20">
    <property type="match status" value="1"/>
</dbReference>
<dbReference type="Gene3D" id="3.30.70.1660">
    <property type="match status" value="1"/>
</dbReference>
<dbReference type="Gene3D" id="6.10.140.1950">
    <property type="match status" value="1"/>
</dbReference>
<dbReference type="HAMAP" id="MF_00093">
    <property type="entry name" value="Rel_fac_1"/>
    <property type="match status" value="1"/>
</dbReference>
<dbReference type="InterPro" id="IPR005139">
    <property type="entry name" value="PCRF"/>
</dbReference>
<dbReference type="InterPro" id="IPR000352">
    <property type="entry name" value="Pep_chain_release_fac_I"/>
</dbReference>
<dbReference type="InterPro" id="IPR045853">
    <property type="entry name" value="Pep_chain_release_fac_I_sf"/>
</dbReference>
<dbReference type="InterPro" id="IPR050057">
    <property type="entry name" value="Prokaryotic/Mito_RF"/>
</dbReference>
<dbReference type="InterPro" id="IPR004373">
    <property type="entry name" value="RF-1"/>
</dbReference>
<dbReference type="NCBIfam" id="TIGR00019">
    <property type="entry name" value="prfA"/>
    <property type="match status" value="1"/>
</dbReference>
<dbReference type="NCBIfam" id="NF001859">
    <property type="entry name" value="PRK00591.1"/>
    <property type="match status" value="1"/>
</dbReference>
<dbReference type="PANTHER" id="PTHR43804">
    <property type="entry name" value="LD18447P"/>
    <property type="match status" value="1"/>
</dbReference>
<dbReference type="PANTHER" id="PTHR43804:SF7">
    <property type="entry name" value="LD18447P"/>
    <property type="match status" value="1"/>
</dbReference>
<dbReference type="Pfam" id="PF03462">
    <property type="entry name" value="PCRF"/>
    <property type="match status" value="1"/>
</dbReference>
<dbReference type="Pfam" id="PF00472">
    <property type="entry name" value="RF-1"/>
    <property type="match status" value="1"/>
</dbReference>
<dbReference type="SMART" id="SM00937">
    <property type="entry name" value="PCRF"/>
    <property type="match status" value="1"/>
</dbReference>
<dbReference type="SUPFAM" id="SSF75620">
    <property type="entry name" value="Release factor"/>
    <property type="match status" value="1"/>
</dbReference>
<dbReference type="PROSITE" id="PS00745">
    <property type="entry name" value="RF_PROK_I"/>
    <property type="match status" value="1"/>
</dbReference>
<name>RF1_ACTP7</name>
<accession>B3GZJ0</accession>
<gene>
    <name evidence="1" type="primary">prfA</name>
    <name type="ordered locus">APP7_2131</name>
</gene>
<organism>
    <name type="scientific">Actinobacillus pleuropneumoniae serotype 7 (strain AP76)</name>
    <dbReference type="NCBI Taxonomy" id="537457"/>
    <lineage>
        <taxon>Bacteria</taxon>
        <taxon>Pseudomonadati</taxon>
        <taxon>Pseudomonadota</taxon>
        <taxon>Gammaproteobacteria</taxon>
        <taxon>Pasteurellales</taxon>
        <taxon>Pasteurellaceae</taxon>
        <taxon>Actinobacillus</taxon>
    </lineage>
</organism>
<protein>
    <recommendedName>
        <fullName evidence="1">Peptide chain release factor 1</fullName>
        <shortName evidence="1">RF-1</shortName>
    </recommendedName>
</protein>
<proteinExistence type="inferred from homology"/>